<feature type="chain" id="PRO_0000074134" description="Uncharacterized protein R02095">
    <location>
        <begin position="1"/>
        <end position="1029"/>
    </location>
</feature>
<feature type="domain" description="Guanylate cyclase" evidence="2">
    <location>
        <begin position="39"/>
        <end position="168"/>
    </location>
</feature>
<feature type="region of interest" description="Disordered" evidence="3">
    <location>
        <begin position="1"/>
        <end position="31"/>
    </location>
</feature>
<feature type="compositionally biased region" description="Basic and acidic residues" evidence="3">
    <location>
        <begin position="1"/>
        <end position="23"/>
    </location>
</feature>
<feature type="binding site" evidence="1">
    <location>
        <begin position="261"/>
        <end position="268"/>
    </location>
    <ligand>
        <name>ATP</name>
        <dbReference type="ChEBI" id="CHEBI:30616"/>
    </ligand>
</feature>
<feature type="sequence conflict" description="In Ref. 3." evidence="4" ref="3">
    <original>A</original>
    <variation>P</variation>
    <location>
        <position position="323"/>
    </location>
</feature>
<comment type="sequence caution" evidence="4">
    <conflict type="frameshift">
        <sequence resource="EMBL-CDS" id="AAA88525"/>
    </conflict>
</comment>
<dbReference type="EMBL" id="AL591688">
    <property type="protein sequence ID" value="CAC46674.1"/>
    <property type="molecule type" value="Genomic_DNA"/>
</dbReference>
<dbReference type="EMBL" id="M30934">
    <property type="protein sequence ID" value="AAA88525.1"/>
    <property type="status" value="ALT_FRAME"/>
    <property type="molecule type" value="Genomic_DNA"/>
</dbReference>
<dbReference type="RefSeq" id="NP_386201.1">
    <property type="nucleotide sequence ID" value="NC_003047.1"/>
</dbReference>
<dbReference type="SMR" id="Q52999"/>
<dbReference type="EnsemblBacteria" id="CAC46674">
    <property type="protein sequence ID" value="CAC46674"/>
    <property type="gene ID" value="SMc01491"/>
</dbReference>
<dbReference type="KEGG" id="sme:SMc01491"/>
<dbReference type="PATRIC" id="fig|266834.11.peg.3551"/>
<dbReference type="eggNOG" id="COG1672">
    <property type="taxonomic scope" value="Bacteria"/>
</dbReference>
<dbReference type="eggNOG" id="COG2114">
    <property type="taxonomic scope" value="Bacteria"/>
</dbReference>
<dbReference type="HOGENOM" id="CLU_004435_3_1_5"/>
<dbReference type="OrthoDB" id="9785312at2"/>
<dbReference type="Proteomes" id="UP000001976">
    <property type="component" value="Chromosome"/>
</dbReference>
<dbReference type="GO" id="GO:0005737">
    <property type="term" value="C:cytoplasm"/>
    <property type="evidence" value="ECO:0007669"/>
    <property type="project" value="TreeGrafter"/>
</dbReference>
<dbReference type="GO" id="GO:0004016">
    <property type="term" value="F:adenylate cyclase activity"/>
    <property type="evidence" value="ECO:0007669"/>
    <property type="project" value="TreeGrafter"/>
</dbReference>
<dbReference type="GO" id="GO:0005524">
    <property type="term" value="F:ATP binding"/>
    <property type="evidence" value="ECO:0007669"/>
    <property type="project" value="UniProtKB-KW"/>
</dbReference>
<dbReference type="GO" id="GO:0009190">
    <property type="term" value="P:cyclic nucleotide biosynthetic process"/>
    <property type="evidence" value="ECO:0007669"/>
    <property type="project" value="InterPro"/>
</dbReference>
<dbReference type="GO" id="GO:0035556">
    <property type="term" value="P:intracellular signal transduction"/>
    <property type="evidence" value="ECO:0007669"/>
    <property type="project" value="InterPro"/>
</dbReference>
<dbReference type="CDD" id="cd07302">
    <property type="entry name" value="CHD"/>
    <property type="match status" value="1"/>
</dbReference>
<dbReference type="Gene3D" id="3.30.70.1230">
    <property type="entry name" value="Nucleotide cyclase"/>
    <property type="match status" value="1"/>
</dbReference>
<dbReference type="InterPro" id="IPR001054">
    <property type="entry name" value="A/G_cyclase"/>
</dbReference>
<dbReference type="InterPro" id="IPR041664">
    <property type="entry name" value="AAA_16"/>
</dbReference>
<dbReference type="InterPro" id="IPR029787">
    <property type="entry name" value="Nucleotide_cyclase"/>
</dbReference>
<dbReference type="InterPro" id="IPR027417">
    <property type="entry name" value="P-loop_NTPase"/>
</dbReference>
<dbReference type="PANTHER" id="PTHR16305:SF28">
    <property type="entry name" value="GUANYLATE CYCLASE DOMAIN-CONTAINING PROTEIN"/>
    <property type="match status" value="1"/>
</dbReference>
<dbReference type="PANTHER" id="PTHR16305">
    <property type="entry name" value="TESTICULAR SOLUBLE ADENYLYL CYCLASE"/>
    <property type="match status" value="1"/>
</dbReference>
<dbReference type="Pfam" id="PF13191">
    <property type="entry name" value="AAA_16"/>
    <property type="match status" value="1"/>
</dbReference>
<dbReference type="Pfam" id="PF00211">
    <property type="entry name" value="Guanylate_cyc"/>
    <property type="match status" value="1"/>
</dbReference>
<dbReference type="SMART" id="SM00044">
    <property type="entry name" value="CYCc"/>
    <property type="match status" value="1"/>
</dbReference>
<dbReference type="SUPFAM" id="SSF55073">
    <property type="entry name" value="Nucleotide cyclase"/>
    <property type="match status" value="1"/>
</dbReference>
<dbReference type="SUPFAM" id="SSF52540">
    <property type="entry name" value="P-loop containing nucleoside triphosphate hydrolases"/>
    <property type="match status" value="1"/>
</dbReference>
<dbReference type="PROSITE" id="PS50125">
    <property type="entry name" value="GUANYLATE_CYCLASE_2"/>
    <property type="match status" value="1"/>
</dbReference>
<reference key="1">
    <citation type="journal article" date="2001" name="Proc. Natl. Acad. Sci. U.S.A.">
        <title>Analysis of the chromosome sequence of the legume symbiont Sinorhizobium meliloti strain 1021.</title>
        <authorList>
            <person name="Capela D."/>
            <person name="Barloy-Hubler F."/>
            <person name="Gouzy J."/>
            <person name="Bothe G."/>
            <person name="Ampe F."/>
            <person name="Batut J."/>
            <person name="Boistard P."/>
            <person name="Becker A."/>
            <person name="Boutry M."/>
            <person name="Cadieu E."/>
            <person name="Dreano S."/>
            <person name="Gloux S."/>
            <person name="Godrie T."/>
            <person name="Goffeau A."/>
            <person name="Kahn D."/>
            <person name="Kiss E."/>
            <person name="Lelaure V."/>
            <person name="Masuy D."/>
            <person name="Pohl T."/>
            <person name="Portetelle D."/>
            <person name="Puehler A."/>
            <person name="Purnelle B."/>
            <person name="Ramsperger U."/>
            <person name="Renard C."/>
            <person name="Thebault P."/>
            <person name="Vandenbol M."/>
            <person name="Weidner S."/>
            <person name="Galibert F."/>
        </authorList>
    </citation>
    <scope>NUCLEOTIDE SEQUENCE [LARGE SCALE GENOMIC DNA]</scope>
    <source>
        <strain>1021</strain>
    </source>
</reference>
<reference key="2">
    <citation type="journal article" date="2001" name="Science">
        <title>The composite genome of the legume symbiont Sinorhizobium meliloti.</title>
        <authorList>
            <person name="Galibert F."/>
            <person name="Finan T.M."/>
            <person name="Long S.R."/>
            <person name="Puehler A."/>
            <person name="Abola P."/>
            <person name="Ampe F."/>
            <person name="Barloy-Hubler F."/>
            <person name="Barnett M.J."/>
            <person name="Becker A."/>
            <person name="Boistard P."/>
            <person name="Bothe G."/>
            <person name="Boutry M."/>
            <person name="Bowser L."/>
            <person name="Buhrmester J."/>
            <person name="Cadieu E."/>
            <person name="Capela D."/>
            <person name="Chain P."/>
            <person name="Cowie A."/>
            <person name="Davis R.W."/>
            <person name="Dreano S."/>
            <person name="Federspiel N.A."/>
            <person name="Fisher R.F."/>
            <person name="Gloux S."/>
            <person name="Godrie T."/>
            <person name="Goffeau A."/>
            <person name="Golding B."/>
            <person name="Gouzy J."/>
            <person name="Gurjal M."/>
            <person name="Hernandez-Lucas I."/>
            <person name="Hong A."/>
            <person name="Huizar L."/>
            <person name="Hyman R.W."/>
            <person name="Jones T."/>
            <person name="Kahn D."/>
            <person name="Kahn M.L."/>
            <person name="Kalman S."/>
            <person name="Keating D.H."/>
            <person name="Kiss E."/>
            <person name="Komp C."/>
            <person name="Lelaure V."/>
            <person name="Masuy D."/>
            <person name="Palm C."/>
            <person name="Peck M.C."/>
            <person name="Pohl T.M."/>
            <person name="Portetelle D."/>
            <person name="Purnelle B."/>
            <person name="Ramsperger U."/>
            <person name="Surzycki R."/>
            <person name="Thebault P."/>
            <person name="Vandenbol M."/>
            <person name="Vorhoelter F.J."/>
            <person name="Weidner S."/>
            <person name="Wells D.H."/>
            <person name="Wong K."/>
            <person name="Yeh K.-C."/>
            <person name="Batut J."/>
        </authorList>
    </citation>
    <scope>NUCLEOTIDE SEQUENCE [LARGE SCALE GENOMIC DNA]</scope>
    <source>
        <strain>1021</strain>
    </source>
</reference>
<reference key="3">
    <citation type="submission" date="1990-11" db="EMBL/GenBank/DDBJ databases">
        <authorList>
            <person name="Bent A.F."/>
            <person name="Signer E.R."/>
        </authorList>
    </citation>
    <scope>NUCLEOTIDE SEQUENCE [GENOMIC DNA] OF 1-483</scope>
    <source>
        <strain>1021</strain>
    </source>
</reference>
<sequence>MREWCMLRESRTNTPRRAAERGKRPGGSSVRGGERRIVTALCYDLVGSTDLMHVMDIEDYQELMSAFQLASKQAIASHSGVMQHEAGDGGVALFPIELEAKDAASLAIRAGLGIVEACKRVGREAGQDDLQVRVGIATSVALVLEGSREGWTREPVTGAALAMAARLQAITAPNSVLVSEETRHLAGRSYAFVFQGSKELKGFAAPEKVWRALGHKVGVDRFYAFGRMGGPLINRENELNTIGQLWDGVLAGQGSVVLIQGDAGIGKSRLLREIRRRTRAKRSKLLFFQCLPGGFRSTLHPLLNNLPEAVSGSAGQMGPTAAAVAALFERNGIRDPAVVDVFSYLLGAQGSRLQSNEDPKAIREKAHRALLRALEAVCRRGPAVVAVEDVHWIDPTSRDLLGEAARIIAKFPVLLVTTSRPSYASEWLDAANPTRLALRPLDSDETRLAIKAKWPEHRLALLPDLFDATERISGGVPLFIEEICQWVSQNVEPDTMRLSESANPSHVSAFESILESRLQQLGTAREVARAAAVAGTQVTLPLLRALLPDFGKSALANAADTLCETGFLTRIRVPGRTAYGFRHTLIQETIYNAVLRKQRQVLHRRLFTAVNQNRGMAAWIDTGALAEHAERAGLVEEAVPLFIAAGKESSSRSAMIEARQFLEHALDLCGQMSESDTAEALKLLALTALGPILIGTVGLSSEPARRLYEDAVEIARRRPMSEQSQWFPIYWGWWLTGQDFRVMHDRALEVRSMLSKANEPEIQLQVNHCIWAIDFNLGRHRETQDAIKAGLALYDEKRAKESRTEFGGHDAKVCGLGQLALSLWLTGRTKASDAALSRMIAFTDRIAHAHSKAHSLDTEAVSAFYRDDFERLTEVSARMADFAKRHKMQSLSGQSLLFSGWAEAHRTGLASGHARFQNGLSLLRELGAVADLPIYLCMHATLLGLAGKIEPAIEVVNEAIGRGEETGHAYWLAELHRCRAILRARAGERKDAVAADLRCAVEIAESQGATALTRRARHSMRELGIVIGR</sequence>
<evidence type="ECO:0000255" key="1"/>
<evidence type="ECO:0000255" key="2">
    <source>
        <dbReference type="PROSITE-ProRule" id="PRU00099"/>
    </source>
</evidence>
<evidence type="ECO:0000256" key="3">
    <source>
        <dbReference type="SAM" id="MobiDB-lite"/>
    </source>
</evidence>
<evidence type="ECO:0000305" key="4"/>
<accession>Q52999</accession>
<protein>
    <recommendedName>
        <fullName>Uncharacterized protein R02095</fullName>
    </recommendedName>
</protein>
<proteinExistence type="predicted"/>
<gene>
    <name type="ordered locus">R02095</name>
    <name type="ORF">SMc01491</name>
</gene>
<organism>
    <name type="scientific">Rhizobium meliloti (strain 1021)</name>
    <name type="common">Ensifer meliloti</name>
    <name type="synonym">Sinorhizobium meliloti</name>
    <dbReference type="NCBI Taxonomy" id="266834"/>
    <lineage>
        <taxon>Bacteria</taxon>
        <taxon>Pseudomonadati</taxon>
        <taxon>Pseudomonadota</taxon>
        <taxon>Alphaproteobacteria</taxon>
        <taxon>Hyphomicrobiales</taxon>
        <taxon>Rhizobiaceae</taxon>
        <taxon>Sinorhizobium/Ensifer group</taxon>
        <taxon>Sinorhizobium</taxon>
    </lineage>
</organism>
<name>Y2095_RHIME</name>
<keyword id="KW-0067">ATP-binding</keyword>
<keyword id="KW-0547">Nucleotide-binding</keyword>
<keyword id="KW-1185">Reference proteome</keyword>